<feature type="chain" id="PRO_0000291201" description="Tetraacyldisaccharide 4'-kinase">
    <location>
        <begin position="1"/>
        <end position="338"/>
    </location>
</feature>
<feature type="binding site" evidence="1">
    <location>
        <begin position="65"/>
        <end position="72"/>
    </location>
    <ligand>
        <name>ATP</name>
        <dbReference type="ChEBI" id="CHEBI:30616"/>
    </ligand>
</feature>
<sequence length="338" mass="36394">MSEISNRLEARLAREWQQRGPLAWALTPFACVFGAIAAARRAAFSFGWLKSVRVGVPVVVVGNVTVGGTGKTPTVIALVEALRVAGFNPGVVSRGYGARVTTPTQITPASAASVGGDEPLLISRRTGAPVWVCPDRVAAAQALCAAHREVDVIVSDDGLQHYRLQRDVELVVFDHRLGGNGFLLPAGPLREPLSRRRDATLINDPYARTLPAWPNTFALQLAPGDAWHLDNPALRRPLAQFSGDRVLAAAGIGAPERFFATLRAAGLTPATRALPDHYAFERNPFTDVDADTILITEKDAVKLGSWHDARIWVVPVEAALDHRLIALVVEKVRGRSPA</sequence>
<proteinExistence type="inferred from homology"/>
<evidence type="ECO:0000255" key="1">
    <source>
        <dbReference type="HAMAP-Rule" id="MF_00409"/>
    </source>
</evidence>
<comment type="function">
    <text evidence="1">Transfers the gamma-phosphate of ATP to the 4'-position of a tetraacyldisaccharide 1-phosphate intermediate (termed DS-1-P) to form tetraacyldisaccharide 1,4'-bis-phosphate (lipid IVA).</text>
</comment>
<comment type="catalytic activity">
    <reaction evidence="1">
        <text>a lipid A disaccharide + ATP = a lipid IVA + ADP + H(+)</text>
        <dbReference type="Rhea" id="RHEA:67840"/>
        <dbReference type="ChEBI" id="CHEBI:15378"/>
        <dbReference type="ChEBI" id="CHEBI:30616"/>
        <dbReference type="ChEBI" id="CHEBI:176343"/>
        <dbReference type="ChEBI" id="CHEBI:176425"/>
        <dbReference type="ChEBI" id="CHEBI:456216"/>
        <dbReference type="EC" id="2.7.1.130"/>
    </reaction>
</comment>
<comment type="pathway">
    <text evidence="1">Glycolipid biosynthesis; lipid IV(A) biosynthesis; lipid IV(A) from (3R)-3-hydroxytetradecanoyl-[acyl-carrier-protein] and UDP-N-acetyl-alpha-D-glucosamine: step 6/6.</text>
</comment>
<comment type="similarity">
    <text evidence="1">Belongs to the LpxK family.</text>
</comment>
<dbReference type="EC" id="2.7.1.130" evidence="1"/>
<dbReference type="EMBL" id="CP000270">
    <property type="protein sequence ID" value="ABE32168.1"/>
    <property type="molecule type" value="Genomic_DNA"/>
</dbReference>
<dbReference type="RefSeq" id="WP_011489668.1">
    <property type="nucleotide sequence ID" value="NC_007951.1"/>
</dbReference>
<dbReference type="SMR" id="Q13US1"/>
<dbReference type="STRING" id="266265.Bxe_A0766"/>
<dbReference type="KEGG" id="bxb:DR64_2934"/>
<dbReference type="KEGG" id="bxe:Bxe_A0766"/>
<dbReference type="PATRIC" id="fig|266265.5.peg.3825"/>
<dbReference type="eggNOG" id="COG1663">
    <property type="taxonomic scope" value="Bacteria"/>
</dbReference>
<dbReference type="OrthoDB" id="9766423at2"/>
<dbReference type="UniPathway" id="UPA00359">
    <property type="reaction ID" value="UER00482"/>
</dbReference>
<dbReference type="Proteomes" id="UP000001817">
    <property type="component" value="Chromosome 1"/>
</dbReference>
<dbReference type="GO" id="GO:0005886">
    <property type="term" value="C:plasma membrane"/>
    <property type="evidence" value="ECO:0007669"/>
    <property type="project" value="TreeGrafter"/>
</dbReference>
<dbReference type="GO" id="GO:0005524">
    <property type="term" value="F:ATP binding"/>
    <property type="evidence" value="ECO:0007669"/>
    <property type="project" value="UniProtKB-UniRule"/>
</dbReference>
<dbReference type="GO" id="GO:0009029">
    <property type="term" value="F:tetraacyldisaccharide 4'-kinase activity"/>
    <property type="evidence" value="ECO:0007669"/>
    <property type="project" value="UniProtKB-UniRule"/>
</dbReference>
<dbReference type="GO" id="GO:0009245">
    <property type="term" value="P:lipid A biosynthetic process"/>
    <property type="evidence" value="ECO:0007669"/>
    <property type="project" value="UniProtKB-UniRule"/>
</dbReference>
<dbReference type="GO" id="GO:0009244">
    <property type="term" value="P:lipopolysaccharide core region biosynthetic process"/>
    <property type="evidence" value="ECO:0007669"/>
    <property type="project" value="TreeGrafter"/>
</dbReference>
<dbReference type="HAMAP" id="MF_00409">
    <property type="entry name" value="LpxK"/>
    <property type="match status" value="1"/>
</dbReference>
<dbReference type="InterPro" id="IPR003758">
    <property type="entry name" value="LpxK"/>
</dbReference>
<dbReference type="InterPro" id="IPR027417">
    <property type="entry name" value="P-loop_NTPase"/>
</dbReference>
<dbReference type="NCBIfam" id="TIGR00682">
    <property type="entry name" value="lpxK"/>
    <property type="match status" value="1"/>
</dbReference>
<dbReference type="PANTHER" id="PTHR42724">
    <property type="entry name" value="TETRAACYLDISACCHARIDE 4'-KINASE"/>
    <property type="match status" value="1"/>
</dbReference>
<dbReference type="PANTHER" id="PTHR42724:SF1">
    <property type="entry name" value="TETRAACYLDISACCHARIDE 4'-KINASE, MITOCHONDRIAL-RELATED"/>
    <property type="match status" value="1"/>
</dbReference>
<dbReference type="Pfam" id="PF02606">
    <property type="entry name" value="LpxK"/>
    <property type="match status" value="1"/>
</dbReference>
<dbReference type="SUPFAM" id="SSF52540">
    <property type="entry name" value="P-loop containing nucleoside triphosphate hydrolases"/>
    <property type="match status" value="1"/>
</dbReference>
<protein>
    <recommendedName>
        <fullName evidence="1">Tetraacyldisaccharide 4'-kinase</fullName>
        <ecNumber evidence="1">2.7.1.130</ecNumber>
    </recommendedName>
    <alternativeName>
        <fullName evidence="1">Lipid A 4'-kinase</fullName>
    </alternativeName>
</protein>
<gene>
    <name evidence="1" type="primary">lpxK</name>
    <name type="ordered locus">Bxeno_A3630</name>
    <name type="ORF">Bxe_A0766</name>
</gene>
<organism>
    <name type="scientific">Paraburkholderia xenovorans (strain LB400)</name>
    <dbReference type="NCBI Taxonomy" id="266265"/>
    <lineage>
        <taxon>Bacteria</taxon>
        <taxon>Pseudomonadati</taxon>
        <taxon>Pseudomonadota</taxon>
        <taxon>Betaproteobacteria</taxon>
        <taxon>Burkholderiales</taxon>
        <taxon>Burkholderiaceae</taxon>
        <taxon>Paraburkholderia</taxon>
    </lineage>
</organism>
<name>LPXK_PARXL</name>
<accession>Q13US1</accession>
<reference key="1">
    <citation type="journal article" date="2006" name="Proc. Natl. Acad. Sci. U.S.A.">
        <title>Burkholderia xenovorans LB400 harbors a multi-replicon, 9.73-Mbp genome shaped for versatility.</title>
        <authorList>
            <person name="Chain P.S.G."/>
            <person name="Denef V.J."/>
            <person name="Konstantinidis K.T."/>
            <person name="Vergez L.M."/>
            <person name="Agullo L."/>
            <person name="Reyes V.L."/>
            <person name="Hauser L."/>
            <person name="Cordova M."/>
            <person name="Gomez L."/>
            <person name="Gonzalez M."/>
            <person name="Land M."/>
            <person name="Lao V."/>
            <person name="Larimer F."/>
            <person name="LiPuma J.J."/>
            <person name="Mahenthiralingam E."/>
            <person name="Malfatti S.A."/>
            <person name="Marx C.J."/>
            <person name="Parnell J.J."/>
            <person name="Ramette A."/>
            <person name="Richardson P."/>
            <person name="Seeger M."/>
            <person name="Smith D."/>
            <person name="Spilker T."/>
            <person name="Sul W.J."/>
            <person name="Tsoi T.V."/>
            <person name="Ulrich L.E."/>
            <person name="Zhulin I.B."/>
            <person name="Tiedje J.M."/>
        </authorList>
    </citation>
    <scope>NUCLEOTIDE SEQUENCE [LARGE SCALE GENOMIC DNA]</scope>
    <source>
        <strain>LB400</strain>
    </source>
</reference>
<keyword id="KW-0067">ATP-binding</keyword>
<keyword id="KW-0418">Kinase</keyword>
<keyword id="KW-0441">Lipid A biosynthesis</keyword>
<keyword id="KW-0444">Lipid biosynthesis</keyword>
<keyword id="KW-0443">Lipid metabolism</keyword>
<keyword id="KW-0547">Nucleotide-binding</keyword>
<keyword id="KW-1185">Reference proteome</keyword>
<keyword id="KW-0808">Transferase</keyword>